<organism>
    <name type="scientific">Chromohalobacter salexigens (strain ATCC BAA-138 / DSM 3043 / CIP 106854 / NCIMB 13768 / 1H11)</name>
    <dbReference type="NCBI Taxonomy" id="290398"/>
    <lineage>
        <taxon>Bacteria</taxon>
        <taxon>Pseudomonadati</taxon>
        <taxon>Pseudomonadota</taxon>
        <taxon>Gammaproteobacteria</taxon>
        <taxon>Oceanospirillales</taxon>
        <taxon>Halomonadaceae</taxon>
        <taxon>Chromohalobacter</taxon>
    </lineage>
</organism>
<proteinExistence type="inferred from homology"/>
<sequence length="558" mass="62083">MSQATEFDYIIIGAGSAGNVLATRLTEDSDVSVLLLEAGGPDYRFDFRTQMPAALAYPLQGKRYNWAFETDPEPHMDNRRMECGRGKGLGGSSLINGMCYIRGNALDYDHWAKQPGLEEWDYLSCLPYFKKSETRDIGPNDYHGGDGPVSVTTPKAGNNPLYRTFIEAGKQAGYPETEDVNGYQQEGFGPMDRFVTPKGRRASTARGYLDTAKQRSNLTIETRAVTDVIEFEGKRAVGVRYEQKGQPKQARARREVLLCGGAIASPQILQRSGVGNPEWLKELGIPVVHELPGVGENLQDHLEMYIQYECKEPISLYPALKWYNQPKIGAEWLFKGTGVGASNQFESCGFIRSRDDEEWPNLQYHFLPIAISYNGKSAVQAHGFQAHVGSMRSESRGRIRLTSKDPHAAPSILFNYMAKEKDWEEFRDAIRLTREIIAQPAFDRYRGREISPGPDVQSDEELDNFVKQHAETAYHPCGSCRMGEGDMAVTDAQGRVHGLEGLRVVDASLFPVIPTGNLNAPTIMLAEKIADRIRGREPLPRASVDYYVANGAPAKQAS</sequence>
<protein>
    <recommendedName>
        <fullName evidence="1">Oxygen-dependent choline dehydrogenase</fullName>
        <shortName evidence="1">CDH</shortName>
        <shortName evidence="1">CHD</shortName>
        <ecNumber evidence="1">1.1.99.1</ecNumber>
    </recommendedName>
</protein>
<accession>Q9L4K0</accession>
<reference key="1">
    <citation type="journal article" date="2000" name="Microbiology">
        <title>Genes for the synthesis of the osmoprotectant glycine betaine from choline in the moderately halophilic bacterium Halomonas elongata DSM 3043.</title>
        <authorList>
            <person name="Canovas D."/>
            <person name="Vargas C."/>
            <person name="Kneip S."/>
            <person name="Moron M.J."/>
            <person name="Ventosa A."/>
            <person name="Bremer E."/>
            <person name="Nieto J.J."/>
        </authorList>
    </citation>
    <scope>NUCLEOTIDE SEQUENCE [GENOMIC DNA]</scope>
    <scope>FUNCTION</scope>
</reference>
<comment type="function">
    <text evidence="1 2">Involved in the biosynthesis of the osmoprotectant glycine betaine. Catalyzes the oxidation of choline to betaine aldehyde and betaine aldehyde to glycine betaine at the same rate.</text>
</comment>
<comment type="catalytic activity">
    <reaction evidence="1">
        <text>choline + A = betaine aldehyde + AH2</text>
        <dbReference type="Rhea" id="RHEA:17433"/>
        <dbReference type="ChEBI" id="CHEBI:13193"/>
        <dbReference type="ChEBI" id="CHEBI:15354"/>
        <dbReference type="ChEBI" id="CHEBI:15710"/>
        <dbReference type="ChEBI" id="CHEBI:17499"/>
        <dbReference type="EC" id="1.1.99.1"/>
    </reaction>
</comment>
<comment type="catalytic activity">
    <reaction evidence="1">
        <text>betaine aldehyde + NAD(+) + H2O = glycine betaine + NADH + 2 H(+)</text>
        <dbReference type="Rhea" id="RHEA:15305"/>
        <dbReference type="ChEBI" id="CHEBI:15377"/>
        <dbReference type="ChEBI" id="CHEBI:15378"/>
        <dbReference type="ChEBI" id="CHEBI:15710"/>
        <dbReference type="ChEBI" id="CHEBI:17750"/>
        <dbReference type="ChEBI" id="CHEBI:57540"/>
        <dbReference type="ChEBI" id="CHEBI:57945"/>
    </reaction>
</comment>
<comment type="cofactor">
    <cofactor evidence="1">
        <name>FAD</name>
        <dbReference type="ChEBI" id="CHEBI:57692"/>
    </cofactor>
</comment>
<comment type="pathway">
    <text evidence="1">Amine and polyamine biosynthesis; betaine biosynthesis via choline pathway; betaine aldehyde from choline (cytochrome c reductase route): step 1/1.</text>
</comment>
<comment type="similarity">
    <text evidence="1">Belongs to the GMC oxidoreductase family.</text>
</comment>
<keyword id="KW-0274">FAD</keyword>
<keyword id="KW-0285">Flavoprotein</keyword>
<keyword id="KW-0520">NAD</keyword>
<keyword id="KW-0560">Oxidoreductase</keyword>
<name>BETA2_CHRSD</name>
<dbReference type="EC" id="1.1.99.1" evidence="1"/>
<dbReference type="EMBL" id="AJ238780">
    <property type="protein sequence ID" value="CAB77176.1"/>
    <property type="molecule type" value="Genomic_DNA"/>
</dbReference>
<dbReference type="SMR" id="Q9L4K0"/>
<dbReference type="UniPathway" id="UPA00529">
    <property type="reaction ID" value="UER00385"/>
</dbReference>
<dbReference type="GO" id="GO:0016020">
    <property type="term" value="C:membrane"/>
    <property type="evidence" value="ECO:0007669"/>
    <property type="project" value="TreeGrafter"/>
</dbReference>
<dbReference type="GO" id="GO:0008802">
    <property type="term" value="F:betaine-aldehyde dehydrogenase (NAD+) activity"/>
    <property type="evidence" value="ECO:0007669"/>
    <property type="project" value="RHEA"/>
</dbReference>
<dbReference type="GO" id="GO:0008812">
    <property type="term" value="F:choline dehydrogenase activity"/>
    <property type="evidence" value="ECO:0007669"/>
    <property type="project" value="UniProtKB-UniRule"/>
</dbReference>
<dbReference type="GO" id="GO:0050660">
    <property type="term" value="F:flavin adenine dinucleotide binding"/>
    <property type="evidence" value="ECO:0007669"/>
    <property type="project" value="InterPro"/>
</dbReference>
<dbReference type="GO" id="GO:0019285">
    <property type="term" value="P:glycine betaine biosynthetic process from choline"/>
    <property type="evidence" value="ECO:0007669"/>
    <property type="project" value="UniProtKB-UniRule"/>
</dbReference>
<dbReference type="Gene3D" id="3.50.50.60">
    <property type="entry name" value="FAD/NAD(P)-binding domain"/>
    <property type="match status" value="1"/>
</dbReference>
<dbReference type="Gene3D" id="3.30.560.10">
    <property type="entry name" value="Glucose Oxidase, domain 3"/>
    <property type="match status" value="1"/>
</dbReference>
<dbReference type="HAMAP" id="MF_00750">
    <property type="entry name" value="Choline_dehydrogen"/>
    <property type="match status" value="1"/>
</dbReference>
<dbReference type="InterPro" id="IPR011533">
    <property type="entry name" value="BetA"/>
</dbReference>
<dbReference type="InterPro" id="IPR036188">
    <property type="entry name" value="FAD/NAD-bd_sf"/>
</dbReference>
<dbReference type="InterPro" id="IPR012132">
    <property type="entry name" value="GMC_OxRdtase"/>
</dbReference>
<dbReference type="InterPro" id="IPR000172">
    <property type="entry name" value="GMC_OxRdtase_N"/>
</dbReference>
<dbReference type="InterPro" id="IPR007867">
    <property type="entry name" value="GMC_OxRtase_C"/>
</dbReference>
<dbReference type="NCBIfam" id="TIGR01810">
    <property type="entry name" value="betA"/>
    <property type="match status" value="1"/>
</dbReference>
<dbReference type="NCBIfam" id="NF002550">
    <property type="entry name" value="PRK02106.1"/>
    <property type="match status" value="1"/>
</dbReference>
<dbReference type="PANTHER" id="PTHR11552:SF147">
    <property type="entry name" value="CHOLINE DEHYDROGENASE, MITOCHONDRIAL"/>
    <property type="match status" value="1"/>
</dbReference>
<dbReference type="PANTHER" id="PTHR11552">
    <property type="entry name" value="GLUCOSE-METHANOL-CHOLINE GMC OXIDOREDUCTASE"/>
    <property type="match status" value="1"/>
</dbReference>
<dbReference type="Pfam" id="PF05199">
    <property type="entry name" value="GMC_oxred_C"/>
    <property type="match status" value="1"/>
</dbReference>
<dbReference type="Pfam" id="PF00732">
    <property type="entry name" value="GMC_oxred_N"/>
    <property type="match status" value="1"/>
</dbReference>
<dbReference type="PIRSF" id="PIRSF000137">
    <property type="entry name" value="Alcohol_oxidase"/>
    <property type="match status" value="1"/>
</dbReference>
<dbReference type="SUPFAM" id="SSF54373">
    <property type="entry name" value="FAD-linked reductases, C-terminal domain"/>
    <property type="match status" value="1"/>
</dbReference>
<dbReference type="SUPFAM" id="SSF51905">
    <property type="entry name" value="FAD/NAD(P)-binding domain"/>
    <property type="match status" value="1"/>
</dbReference>
<dbReference type="PROSITE" id="PS00623">
    <property type="entry name" value="GMC_OXRED_1"/>
    <property type="match status" value="1"/>
</dbReference>
<dbReference type="PROSITE" id="PS00624">
    <property type="entry name" value="GMC_OXRED_2"/>
    <property type="match status" value="1"/>
</dbReference>
<evidence type="ECO:0000255" key="1">
    <source>
        <dbReference type="HAMAP-Rule" id="MF_00750"/>
    </source>
</evidence>
<evidence type="ECO:0000269" key="2">
    <source>
    </source>
</evidence>
<feature type="chain" id="PRO_0000205589" description="Oxygen-dependent choline dehydrogenase">
    <location>
        <begin position="1"/>
        <end position="558"/>
    </location>
</feature>
<feature type="active site" description="Proton acceptor" evidence="1">
    <location>
        <position position="475"/>
    </location>
</feature>
<feature type="binding site" evidence="1">
    <location>
        <begin position="8"/>
        <end position="37"/>
    </location>
    <ligand>
        <name>FAD</name>
        <dbReference type="ChEBI" id="CHEBI:57692"/>
    </ligand>
</feature>
<gene>
    <name evidence="1" type="primary">betA</name>
</gene>